<dbReference type="EMBL" id="CP000410">
    <property type="protein sequence ID" value="ABJ55401.1"/>
    <property type="molecule type" value="Genomic_DNA"/>
</dbReference>
<dbReference type="RefSeq" id="WP_000075973.1">
    <property type="nucleotide sequence ID" value="NZ_JAMLJR010000002.1"/>
</dbReference>
<dbReference type="SMR" id="Q04MF5"/>
<dbReference type="PaxDb" id="373153-SPD_0275"/>
<dbReference type="GeneID" id="93922492"/>
<dbReference type="KEGG" id="spd:SPD_0275"/>
<dbReference type="eggNOG" id="COG0103">
    <property type="taxonomic scope" value="Bacteria"/>
</dbReference>
<dbReference type="HOGENOM" id="CLU_046483_2_1_9"/>
<dbReference type="BioCyc" id="SPNE373153:G1G6V-303-MONOMER"/>
<dbReference type="Proteomes" id="UP000001452">
    <property type="component" value="Chromosome"/>
</dbReference>
<dbReference type="GO" id="GO:0022627">
    <property type="term" value="C:cytosolic small ribosomal subunit"/>
    <property type="evidence" value="ECO:0007669"/>
    <property type="project" value="TreeGrafter"/>
</dbReference>
<dbReference type="GO" id="GO:0003723">
    <property type="term" value="F:RNA binding"/>
    <property type="evidence" value="ECO:0007669"/>
    <property type="project" value="TreeGrafter"/>
</dbReference>
<dbReference type="GO" id="GO:0003735">
    <property type="term" value="F:structural constituent of ribosome"/>
    <property type="evidence" value="ECO:0007669"/>
    <property type="project" value="InterPro"/>
</dbReference>
<dbReference type="GO" id="GO:0006412">
    <property type="term" value="P:translation"/>
    <property type="evidence" value="ECO:0007669"/>
    <property type="project" value="UniProtKB-UniRule"/>
</dbReference>
<dbReference type="FunFam" id="3.30.230.10:FF:000001">
    <property type="entry name" value="30S ribosomal protein S9"/>
    <property type="match status" value="1"/>
</dbReference>
<dbReference type="Gene3D" id="3.30.230.10">
    <property type="match status" value="1"/>
</dbReference>
<dbReference type="HAMAP" id="MF_00532_B">
    <property type="entry name" value="Ribosomal_uS9_B"/>
    <property type="match status" value="1"/>
</dbReference>
<dbReference type="InterPro" id="IPR020568">
    <property type="entry name" value="Ribosomal_Su5_D2-typ_SF"/>
</dbReference>
<dbReference type="InterPro" id="IPR000754">
    <property type="entry name" value="Ribosomal_uS9"/>
</dbReference>
<dbReference type="InterPro" id="IPR023035">
    <property type="entry name" value="Ribosomal_uS9_bac/plastid"/>
</dbReference>
<dbReference type="InterPro" id="IPR020574">
    <property type="entry name" value="Ribosomal_uS9_CS"/>
</dbReference>
<dbReference type="InterPro" id="IPR014721">
    <property type="entry name" value="Ribsml_uS5_D2-typ_fold_subgr"/>
</dbReference>
<dbReference type="NCBIfam" id="NF001099">
    <property type="entry name" value="PRK00132.1"/>
    <property type="match status" value="1"/>
</dbReference>
<dbReference type="PANTHER" id="PTHR21569">
    <property type="entry name" value="RIBOSOMAL PROTEIN S9"/>
    <property type="match status" value="1"/>
</dbReference>
<dbReference type="PANTHER" id="PTHR21569:SF1">
    <property type="entry name" value="SMALL RIBOSOMAL SUBUNIT PROTEIN US9M"/>
    <property type="match status" value="1"/>
</dbReference>
<dbReference type="Pfam" id="PF00380">
    <property type="entry name" value="Ribosomal_S9"/>
    <property type="match status" value="1"/>
</dbReference>
<dbReference type="SUPFAM" id="SSF54211">
    <property type="entry name" value="Ribosomal protein S5 domain 2-like"/>
    <property type="match status" value="1"/>
</dbReference>
<dbReference type="PROSITE" id="PS00360">
    <property type="entry name" value="RIBOSOMAL_S9"/>
    <property type="match status" value="1"/>
</dbReference>
<feature type="chain" id="PRO_1000051339" description="Small ribosomal subunit protein uS9">
    <location>
        <begin position="1"/>
        <end position="130"/>
    </location>
</feature>
<feature type="region of interest" description="Disordered" evidence="2">
    <location>
        <begin position="106"/>
        <end position="130"/>
    </location>
</feature>
<feature type="compositionally biased region" description="Basic residues" evidence="2">
    <location>
        <begin position="111"/>
        <end position="130"/>
    </location>
</feature>
<gene>
    <name evidence="1" type="primary">rpsI</name>
    <name type="ordered locus">SPD_0275</name>
</gene>
<name>RS9_STRP2</name>
<protein>
    <recommendedName>
        <fullName evidence="1">Small ribosomal subunit protein uS9</fullName>
    </recommendedName>
    <alternativeName>
        <fullName evidence="3">30S ribosomal protein S9</fullName>
    </alternativeName>
</protein>
<accession>Q04MF5</accession>
<sequence length="130" mass="14234">MSQAQYAGTGRRKNAVARVRLVPGTGKITVNKKDVEEYIPHADLRLVINQPFAVTSTVGSYDVFVNVVGGGYAGQSGAIRHGIARALLQVDPDFRDSLKRAGLLTRDSRKVERKKPGLKKARKASQFSKR</sequence>
<keyword id="KW-1185">Reference proteome</keyword>
<keyword id="KW-0687">Ribonucleoprotein</keyword>
<keyword id="KW-0689">Ribosomal protein</keyword>
<proteinExistence type="inferred from homology"/>
<evidence type="ECO:0000255" key="1">
    <source>
        <dbReference type="HAMAP-Rule" id="MF_00532"/>
    </source>
</evidence>
<evidence type="ECO:0000256" key="2">
    <source>
        <dbReference type="SAM" id="MobiDB-lite"/>
    </source>
</evidence>
<evidence type="ECO:0000305" key="3"/>
<reference key="1">
    <citation type="journal article" date="2007" name="J. Bacteriol.">
        <title>Genome sequence of Avery's virulent serotype 2 strain D39 of Streptococcus pneumoniae and comparison with that of unencapsulated laboratory strain R6.</title>
        <authorList>
            <person name="Lanie J.A."/>
            <person name="Ng W.-L."/>
            <person name="Kazmierczak K.M."/>
            <person name="Andrzejewski T.M."/>
            <person name="Davidsen T.M."/>
            <person name="Wayne K.J."/>
            <person name="Tettelin H."/>
            <person name="Glass J.I."/>
            <person name="Winkler M.E."/>
        </authorList>
    </citation>
    <scope>NUCLEOTIDE SEQUENCE [LARGE SCALE GENOMIC DNA]</scope>
    <source>
        <strain>D39 / NCTC 7466</strain>
    </source>
</reference>
<comment type="similarity">
    <text evidence="1">Belongs to the universal ribosomal protein uS9 family.</text>
</comment>
<organism>
    <name type="scientific">Streptococcus pneumoniae serotype 2 (strain D39 / NCTC 7466)</name>
    <dbReference type="NCBI Taxonomy" id="373153"/>
    <lineage>
        <taxon>Bacteria</taxon>
        <taxon>Bacillati</taxon>
        <taxon>Bacillota</taxon>
        <taxon>Bacilli</taxon>
        <taxon>Lactobacillales</taxon>
        <taxon>Streptococcaceae</taxon>
        <taxon>Streptococcus</taxon>
    </lineage>
</organism>